<comment type="function">
    <text evidence="3">Hydrolase that can remove conjugated ubiquitin from target proteins such as p53/TP53, RPS2/us5, RPS3/us3, RPS10/eS10, BECN1, SNX3 and CFTR. Acts as an essential regulator of p53/TP53 stability: in unstressed cells, specifically deubiquitinates p53/TP53 in the cytoplasm, leading to counteract MDM2 action and stabilize p53/TP53. Following DNA damage, translocates to the nucleus and deubiquitinates p53/TP53, leading to regulate the p53/TP53-dependent DNA damage response. Component of a regulatory loop that controls autophagy and p53/TP53 levels: mediates deubiquitination of BECN1, a key regulator of autophagy, leading to stabilize the PIK3C3/VPS34-containing complexes. In turn, PIK3C3/VPS34-containing complexes regulate USP10 stability, suggesting the existence of a regulatory system by which PIK3C3/VPS34-containing complexes regulate p53/TP53 protein levels via USP10 and USP13. Does not deubiquitinate MDM2. Plays a key role in 40S ribosome subunit recycling when a ribosome has stalled during translation: acts both by inhibiting formation of stress granules, which store stalled translation pre-initiation complexes, and mediating deubiquitination of 40S ribosome subunits. Acts as a negative regulator of stress granules formation by lowering G3BP1 and G3BP2 valence, thereby preventing G3BP1 and G3BP2 ability to undergo liquid-liquid phase separation (LLPS) and assembly of stress granules. Promotes 40S ribosome subunit recycling following ribosome dissociation in response to ribosome stalling by mediating deubiquitination of 40S ribosomal proteins RPS2/us5, RPS3/us3 and RPS10/eS10, thereby preventing their degradation by the proteasome. Part of a ribosome quality control that takes place when ribosomes have stalled during translation initiation (iRQC): USP10 acts by removing monoubiquitination of RPS2/us5 and RPS3/us3, promoting 40S ribosomal subunit recycling. Deubiquitinates CFTR in early endosomes, enhancing its endocytic recycling. Involved in a TANK-dependent negative feedback response to attenuate NF-kappa-B activation via deubiquitinating IKBKG or TRAF6 in response to interleukin-1-beta (IL1B) stimulation or upon DNA damage. Deubiquitinates TBX21 leading to its stabilization. Plays a negative role in the RLR signaling pathway upon RNA virus infection by blocking the RIGI-mediated MAVS activation. Mechanistically, removes the unanchored 'Lys-63'-linked polyubiquitin chains of MAVS to inhibit its aggregation, essential for its activation.</text>
</comment>
<comment type="catalytic activity">
    <reaction evidence="3">
        <text>Thiol-dependent hydrolysis of ester, thioester, amide, peptide and isopeptide bonds formed by the C-terminal Gly of ubiquitin (a 76-residue protein attached to proteins as an intracellular targeting signal).</text>
        <dbReference type="EC" id="3.4.19.12"/>
    </reaction>
</comment>
<comment type="activity regulation">
    <text evidence="1">Specifically inhibited by spautin-1 (specific and potent autophagy inhibitor-1), a derivative of MBCQ that binds to USP10 and inhibits deubiquitinase activity. Regulated by PIK3C3/VPS34-containing complexes (By similarity).</text>
</comment>
<comment type="subunit">
    <text evidence="3">Found in a deubiquitination complex with TANK, USP10 and ZC3H12A; this complex inhibits genotoxic stress- or interleukin-1-beta (IL1B)-mediated NF-kappa-B activation by promoting IKBKG or TRAF6 deubiquitination. Interacts with IKBKG; this interaction increases in response to DNA damage. Interacts with TANK; this interaction increases in response to DNA damage. Interacts with TRAF6; this interaction increases in response to DNA damage. Interacts with ZC3H12A; this interaction increases in response to DNA damage. Interacts with G3BP1 (via NTF2 domain) and G3BP2 (via NTF2 domain); inhibiting stress granule formation.</text>
</comment>
<comment type="subcellular location">
    <subcellularLocation>
        <location evidence="3">Cytoplasm</location>
    </subcellularLocation>
    <subcellularLocation>
        <location evidence="3">Nucleus</location>
    </subcellularLocation>
    <subcellularLocation>
        <location evidence="3">Early endosome</location>
    </subcellularLocation>
    <text evidence="3">Cytoplasmic in normal conditions (By similarity). After DNA damage, translocates to the nucleus following phosphorylation by ATM (By similarity).</text>
</comment>
<comment type="PTM">
    <text evidence="1">Phosphorylated by ATM following DNA damage, leading to stabilization and translocation it to the nucleus.</text>
</comment>
<comment type="PTM">
    <text evidence="1">Ubiquitinated. Deubiquitinated by USP13 (By similarity).</text>
</comment>
<comment type="similarity">
    <text evidence="7">Belongs to the peptidase C19 family. USP10 subfamily.</text>
</comment>
<organism>
    <name type="scientific">Rattus norvegicus</name>
    <name type="common">Rat</name>
    <dbReference type="NCBI Taxonomy" id="10116"/>
    <lineage>
        <taxon>Eukaryota</taxon>
        <taxon>Metazoa</taxon>
        <taxon>Chordata</taxon>
        <taxon>Craniata</taxon>
        <taxon>Vertebrata</taxon>
        <taxon>Euteleostomi</taxon>
        <taxon>Mammalia</taxon>
        <taxon>Eutheria</taxon>
        <taxon>Euarchontoglires</taxon>
        <taxon>Glires</taxon>
        <taxon>Rodentia</taxon>
        <taxon>Myomorpha</taxon>
        <taxon>Muroidea</taxon>
        <taxon>Muridae</taxon>
        <taxon>Murinae</taxon>
        <taxon>Rattus</taxon>
    </lineage>
</organism>
<proteinExistence type="evidence at protein level"/>
<feature type="initiator methionine" description="Removed" evidence="3">
    <location>
        <position position="1"/>
    </location>
</feature>
<feature type="chain" id="PRO_0000393000" description="Ubiquitin carboxyl-terminal hydrolase 10">
    <location>
        <begin position="2"/>
        <end position="794"/>
    </location>
</feature>
<feature type="domain" description="USP">
    <location>
        <begin position="411"/>
        <end position="791"/>
    </location>
</feature>
<feature type="region of interest" description="Interaction with p53/TP53" evidence="1">
    <location>
        <begin position="2"/>
        <end position="99"/>
    </location>
</feature>
<feature type="region of interest" description="G3BP1-binding" evidence="3">
    <location>
        <begin position="6"/>
        <end position="21"/>
    </location>
</feature>
<feature type="region of interest" description="Disordered" evidence="6">
    <location>
        <begin position="123"/>
        <end position="164"/>
    </location>
</feature>
<feature type="region of interest" description="Disordered" evidence="6">
    <location>
        <begin position="303"/>
        <end position="326"/>
    </location>
</feature>
<feature type="region of interest" description="Disordered" evidence="6">
    <location>
        <begin position="546"/>
        <end position="588"/>
    </location>
</feature>
<feature type="compositionally biased region" description="Polar residues" evidence="6">
    <location>
        <begin position="313"/>
        <end position="326"/>
    </location>
</feature>
<feature type="compositionally biased region" description="Acidic residues" evidence="6">
    <location>
        <begin position="561"/>
        <end position="577"/>
    </location>
</feature>
<feature type="active site" description="Nucleophile" evidence="4 5">
    <location>
        <position position="420"/>
    </location>
</feature>
<feature type="active site" description="Proton acceptor" evidence="4 5">
    <location>
        <position position="745"/>
    </location>
</feature>
<feature type="modified residue" description="N-acetylalanine" evidence="3">
    <location>
        <position position="2"/>
    </location>
</feature>
<feature type="modified residue" description="Phosphothreonine" evidence="3">
    <location>
        <position position="24"/>
    </location>
</feature>
<feature type="modified residue" description="Phosphothreonine" evidence="3">
    <location>
        <position position="99"/>
    </location>
</feature>
<feature type="modified residue" description="Phosphoserine" evidence="2">
    <location>
        <position position="209"/>
    </location>
</feature>
<feature type="modified residue" description="Phosphoserine" evidence="3">
    <location>
        <position position="224"/>
    </location>
</feature>
<feature type="modified residue" description="Phosphoserine" evidence="3">
    <location>
        <position position="316"/>
    </location>
</feature>
<feature type="modified residue" description="Phosphoserine; by ATM" evidence="3">
    <location>
        <position position="332"/>
    </location>
</feature>
<feature type="modified residue" description="Phosphoserine" evidence="3">
    <location>
        <position position="361"/>
    </location>
</feature>
<feature type="modified residue" description="Phosphoserine" evidence="3">
    <location>
        <position position="366"/>
    </location>
</feature>
<feature type="modified residue" description="Phosphoserine" evidence="3">
    <location>
        <position position="543"/>
    </location>
</feature>
<feature type="modified residue" description="Phosphothreonine" evidence="8">
    <location>
        <position position="568"/>
    </location>
</feature>
<feature type="modified residue" description="Phosphoserine" evidence="8">
    <location>
        <position position="572"/>
    </location>
</feature>
<sequence>MALHNPQYIFGDFSPDEFNQFFVTPRSSVELPPYSGTQCGIQAEEELLDGQEHQRIEFGVDEVIEPSDGLQRAPSYSISSTLNPQAPEFILGCPTSKKTPDDIEKDETYSSIDQYPASALALESSSNAEAETLENDSGAGGLGQRERKKKKKRPPGYYSYLKDGSEEGASPAALVNGHATSVGTNSEGVEDPEFMVDMLPSVMPRTCDSPQNPMDLISDPVPDSPFPRTLGGDARTAGLPEGCRETDFEQPCLPTDNLLRTAVTQPNAGADTTENLAVANGKILESLGEGTAAANGVELHTDESADLDPAKPESQSPPAESALSVSGAISISQPAKSWASLFHDSKPSSSSPVAYVETKCSPPVPSPLASEKQMEVKEGLVPVSEDPVAIKIAELLETVTLVHKPVSLQPRGLINKGNWCYINATLQALVACPPMYHLMKFIPLYSKVQRPCTSTPMIDSFVRLMNEFTNMPVPPKPRQALGDKIVRDIRPGAAFEPTYIYRLLTVIKSSLSEKGRQEDAEEYLGFILNGLHEEMLSLKKLLSPTHEKHSVSNGPGSHLIEDEELEDTGEGSEDEWEQVGPKNKTSVTRQADFVQTPITGIFGGHIRSVVYQQSSKESATLQPFFTLQLDIQSDKIRTVQDALESLVARESVQGYTTKTKQEVEVSRRVTLEKLPPVLVLHLKRFVYEKTGGCQKLVKNIEYPVDLEISRELLSPGVKNKNFKCHRTYRLFAVVYHHGNSATGGHYTTDVFQIGLNGWLRIDDQTVKVINQYQVVRPSADRTAYLLYYRRVDLL</sequence>
<name>UBP10_RAT</name>
<protein>
    <recommendedName>
        <fullName>Ubiquitin carboxyl-terminal hydrolase 10</fullName>
        <ecNumber evidence="3">3.4.19.12</ecNumber>
    </recommendedName>
    <alternativeName>
        <fullName>Deubiquitinating enzyme 10</fullName>
    </alternativeName>
    <alternativeName>
        <fullName>Ubiquitin thioesterase 10</fullName>
    </alternativeName>
    <alternativeName>
        <fullName>Ubiquitin-specific-processing protease 10</fullName>
    </alternativeName>
</protein>
<dbReference type="EC" id="3.4.19.12" evidence="3"/>
<dbReference type="EMBL" id="BC105892">
    <property type="protein sequence ID" value="AAI05893.1"/>
    <property type="molecule type" value="mRNA"/>
</dbReference>
<dbReference type="RefSeq" id="NP_001029318.1">
    <property type="nucleotide sequence ID" value="NM_001034146.2"/>
</dbReference>
<dbReference type="SMR" id="Q3KR59"/>
<dbReference type="BioGRID" id="258846">
    <property type="interactions" value="1"/>
</dbReference>
<dbReference type="FunCoup" id="Q3KR59">
    <property type="interactions" value="3074"/>
</dbReference>
<dbReference type="IntAct" id="Q3KR59">
    <property type="interactions" value="1"/>
</dbReference>
<dbReference type="MINT" id="Q3KR59"/>
<dbReference type="STRING" id="10116.ENSRNOP00000022432"/>
<dbReference type="MEROPS" id="C19.018"/>
<dbReference type="GlyGen" id="Q3KR59">
    <property type="glycosylation" value="1 site"/>
</dbReference>
<dbReference type="iPTMnet" id="Q3KR59"/>
<dbReference type="PhosphoSitePlus" id="Q3KR59"/>
<dbReference type="jPOST" id="Q3KR59"/>
<dbReference type="PaxDb" id="10116-ENSRNOP00000022432"/>
<dbReference type="GeneID" id="307905"/>
<dbReference type="KEGG" id="rno:307905"/>
<dbReference type="UCSC" id="RGD:1561965">
    <property type="organism name" value="rat"/>
</dbReference>
<dbReference type="AGR" id="RGD:1561965"/>
<dbReference type="CTD" id="9100"/>
<dbReference type="RGD" id="1561965">
    <property type="gene designation" value="Usp10"/>
</dbReference>
<dbReference type="VEuPathDB" id="HostDB:ENSRNOG00000016509"/>
<dbReference type="eggNOG" id="KOG1871">
    <property type="taxonomic scope" value="Eukaryota"/>
</dbReference>
<dbReference type="HOGENOM" id="CLU_008279_4_1_1"/>
<dbReference type="InParanoid" id="Q3KR59"/>
<dbReference type="OrthoDB" id="429671at2759"/>
<dbReference type="PhylomeDB" id="Q3KR59"/>
<dbReference type="TreeFam" id="TF323203"/>
<dbReference type="Reactome" id="R-RNO-5656169">
    <property type="pathway name" value="Termination of translesion DNA synthesis"/>
</dbReference>
<dbReference type="Reactome" id="R-RNO-5689880">
    <property type="pathway name" value="Ub-specific processing proteases"/>
</dbReference>
<dbReference type="PRO" id="PR:Q3KR59"/>
<dbReference type="Proteomes" id="UP000002494">
    <property type="component" value="Chromosome 19"/>
</dbReference>
<dbReference type="Bgee" id="ENSRNOG00000016509">
    <property type="expression patterns" value="Expressed in skeletal muscle tissue and 19 other cell types or tissues"/>
</dbReference>
<dbReference type="GO" id="GO:0005737">
    <property type="term" value="C:cytoplasm"/>
    <property type="evidence" value="ECO:0000250"/>
    <property type="project" value="UniProtKB"/>
</dbReference>
<dbReference type="GO" id="GO:0005829">
    <property type="term" value="C:cytosol"/>
    <property type="evidence" value="ECO:0000318"/>
    <property type="project" value="GO_Central"/>
</dbReference>
<dbReference type="GO" id="GO:0022626">
    <property type="term" value="C:cytosolic ribosome"/>
    <property type="evidence" value="ECO:0000266"/>
    <property type="project" value="RGD"/>
</dbReference>
<dbReference type="GO" id="GO:0005769">
    <property type="term" value="C:early endosome"/>
    <property type="evidence" value="ECO:0000250"/>
    <property type="project" value="UniProtKB"/>
</dbReference>
<dbReference type="GO" id="GO:0005634">
    <property type="term" value="C:nucleus"/>
    <property type="evidence" value="ECO:0000250"/>
    <property type="project" value="UniProtKB"/>
</dbReference>
<dbReference type="GO" id="GO:0032991">
    <property type="term" value="C:protein-containing complex"/>
    <property type="evidence" value="ECO:0000250"/>
    <property type="project" value="UniProtKB"/>
</dbReference>
<dbReference type="GO" id="GO:0004843">
    <property type="term" value="F:cysteine-type deubiquitinase activity"/>
    <property type="evidence" value="ECO:0000250"/>
    <property type="project" value="UniProtKB"/>
</dbReference>
<dbReference type="GO" id="GO:0004197">
    <property type="term" value="F:cysteine-type endopeptidase activity"/>
    <property type="evidence" value="ECO:0000250"/>
    <property type="project" value="UniProtKB"/>
</dbReference>
<dbReference type="GO" id="GO:0140678">
    <property type="term" value="F:molecular function inhibitor activity"/>
    <property type="evidence" value="ECO:0000266"/>
    <property type="project" value="RGD"/>
</dbReference>
<dbReference type="GO" id="GO:0002039">
    <property type="term" value="F:p53 binding"/>
    <property type="evidence" value="ECO:0000250"/>
    <property type="project" value="UniProtKB"/>
</dbReference>
<dbReference type="GO" id="GO:0044325">
    <property type="term" value="F:transmembrane transporter binding"/>
    <property type="evidence" value="ECO:0000250"/>
    <property type="project" value="UniProtKB"/>
</dbReference>
<dbReference type="GO" id="GO:0006914">
    <property type="term" value="P:autophagy"/>
    <property type="evidence" value="ECO:0007669"/>
    <property type="project" value="UniProtKB-KW"/>
</dbReference>
<dbReference type="GO" id="GO:0071347">
    <property type="term" value="P:cellular response to interleukin-1"/>
    <property type="evidence" value="ECO:0000250"/>
    <property type="project" value="UniProtKB"/>
</dbReference>
<dbReference type="GO" id="GO:0006974">
    <property type="term" value="P:DNA damage response"/>
    <property type="evidence" value="ECO:0000250"/>
    <property type="project" value="UniProtKB"/>
</dbReference>
<dbReference type="GO" id="GO:0030330">
    <property type="term" value="P:DNA damage response, signal transduction by p53 class mediator"/>
    <property type="evidence" value="ECO:0000250"/>
    <property type="project" value="UniProtKB"/>
</dbReference>
<dbReference type="GO" id="GO:0006281">
    <property type="term" value="P:DNA repair"/>
    <property type="evidence" value="ECO:0007669"/>
    <property type="project" value="UniProtKB-KW"/>
</dbReference>
<dbReference type="GO" id="GO:0035520">
    <property type="term" value="P:monoubiquitinated protein deubiquitination"/>
    <property type="evidence" value="ECO:0000266"/>
    <property type="project" value="RGD"/>
</dbReference>
<dbReference type="GO" id="GO:0043124">
    <property type="term" value="P:negative regulation of canonical NF-kappaB signal transduction"/>
    <property type="evidence" value="ECO:0000250"/>
    <property type="project" value="UniProtKB"/>
</dbReference>
<dbReference type="GO" id="GO:0062030">
    <property type="term" value="P:negative regulation of stress granule assembly"/>
    <property type="evidence" value="ECO:0000250"/>
    <property type="project" value="UniProtKB"/>
</dbReference>
<dbReference type="GO" id="GO:0016579">
    <property type="term" value="P:protein deubiquitination"/>
    <property type="evidence" value="ECO:0000250"/>
    <property type="project" value="UniProtKB"/>
</dbReference>
<dbReference type="GO" id="GO:0006508">
    <property type="term" value="P:proteolysis"/>
    <property type="evidence" value="ECO:0007669"/>
    <property type="project" value="UniProtKB-KW"/>
</dbReference>
<dbReference type="GO" id="GO:0010506">
    <property type="term" value="P:regulation of autophagy"/>
    <property type="evidence" value="ECO:0000250"/>
    <property type="project" value="UniProtKB"/>
</dbReference>
<dbReference type="GO" id="GO:0031647">
    <property type="term" value="P:regulation of protein stability"/>
    <property type="evidence" value="ECO:0000318"/>
    <property type="project" value="GO_Central"/>
</dbReference>
<dbReference type="GO" id="GO:0072344">
    <property type="term" value="P:rescue of stalled ribosome"/>
    <property type="evidence" value="ECO:0000250"/>
    <property type="project" value="UniProtKB"/>
</dbReference>
<dbReference type="CDD" id="cd02257">
    <property type="entry name" value="Peptidase_C19"/>
    <property type="match status" value="1"/>
</dbReference>
<dbReference type="FunFam" id="3.90.70.10:FF:000015">
    <property type="entry name" value="Ubiquitin specific peptidase 10"/>
    <property type="match status" value="1"/>
</dbReference>
<dbReference type="Gene3D" id="3.90.70.10">
    <property type="entry name" value="Cysteine proteinases"/>
    <property type="match status" value="1"/>
</dbReference>
<dbReference type="InterPro" id="IPR009818">
    <property type="entry name" value="PAM2_motif"/>
</dbReference>
<dbReference type="InterPro" id="IPR038765">
    <property type="entry name" value="Papain-like_cys_pep_sf"/>
</dbReference>
<dbReference type="InterPro" id="IPR050164">
    <property type="entry name" value="Peptidase_C19"/>
</dbReference>
<dbReference type="InterPro" id="IPR001394">
    <property type="entry name" value="Peptidase_C19_UCH"/>
</dbReference>
<dbReference type="InterPro" id="IPR018200">
    <property type="entry name" value="USP_CS"/>
</dbReference>
<dbReference type="InterPro" id="IPR028889">
    <property type="entry name" value="USP_dom"/>
</dbReference>
<dbReference type="PANTHER" id="PTHR24006">
    <property type="entry name" value="UBIQUITIN CARBOXYL-TERMINAL HYDROLASE"/>
    <property type="match status" value="1"/>
</dbReference>
<dbReference type="PANTHER" id="PTHR24006:SF687">
    <property type="entry name" value="UBIQUITIN CARBOXYL-TERMINAL HYDROLASE 10"/>
    <property type="match status" value="1"/>
</dbReference>
<dbReference type="Pfam" id="PF07145">
    <property type="entry name" value="PAM2"/>
    <property type="match status" value="1"/>
</dbReference>
<dbReference type="Pfam" id="PF00443">
    <property type="entry name" value="UCH"/>
    <property type="match status" value="1"/>
</dbReference>
<dbReference type="SUPFAM" id="SSF54001">
    <property type="entry name" value="Cysteine proteinases"/>
    <property type="match status" value="1"/>
</dbReference>
<dbReference type="PROSITE" id="PS00972">
    <property type="entry name" value="USP_1"/>
    <property type="match status" value="1"/>
</dbReference>
<dbReference type="PROSITE" id="PS00973">
    <property type="entry name" value="USP_2"/>
    <property type="match status" value="1"/>
</dbReference>
<dbReference type="PROSITE" id="PS50235">
    <property type="entry name" value="USP_3"/>
    <property type="match status" value="1"/>
</dbReference>
<reference key="1">
    <citation type="journal article" date="2004" name="Genome Res.">
        <title>The status, quality, and expansion of the NIH full-length cDNA project: the Mammalian Gene Collection (MGC).</title>
        <authorList>
            <consortium name="The MGC Project Team"/>
        </authorList>
    </citation>
    <scope>NUCLEOTIDE SEQUENCE [LARGE SCALE MRNA]</scope>
    <source>
        <tissue>Spleen</tissue>
    </source>
</reference>
<reference key="2">
    <citation type="journal article" date="2012" name="Nat. Commun.">
        <title>Quantitative maps of protein phosphorylation sites across 14 different rat organs and tissues.</title>
        <authorList>
            <person name="Lundby A."/>
            <person name="Secher A."/>
            <person name="Lage K."/>
            <person name="Nordsborg N.B."/>
            <person name="Dmytriyev A."/>
            <person name="Lundby C."/>
            <person name="Olsen J.V."/>
        </authorList>
    </citation>
    <scope>PHOSPHORYLATION [LARGE SCALE ANALYSIS] AT THR-568 AND SER-572</scope>
    <scope>IDENTIFICATION BY MASS SPECTROMETRY [LARGE SCALE ANALYSIS]</scope>
</reference>
<evidence type="ECO:0000250" key="1"/>
<evidence type="ECO:0000250" key="2">
    <source>
        <dbReference type="UniProtKB" id="P52479"/>
    </source>
</evidence>
<evidence type="ECO:0000250" key="3">
    <source>
        <dbReference type="UniProtKB" id="Q14694"/>
    </source>
</evidence>
<evidence type="ECO:0000255" key="4">
    <source>
        <dbReference type="PROSITE-ProRule" id="PRU10092"/>
    </source>
</evidence>
<evidence type="ECO:0000255" key="5">
    <source>
        <dbReference type="PROSITE-ProRule" id="PRU10093"/>
    </source>
</evidence>
<evidence type="ECO:0000256" key="6">
    <source>
        <dbReference type="SAM" id="MobiDB-lite"/>
    </source>
</evidence>
<evidence type="ECO:0000305" key="7"/>
<evidence type="ECO:0007744" key="8">
    <source>
    </source>
</evidence>
<accession>Q3KR59</accession>
<gene>
    <name type="primary">Usp10</name>
</gene>
<keyword id="KW-0007">Acetylation</keyword>
<keyword id="KW-0072">Autophagy</keyword>
<keyword id="KW-0963">Cytoplasm</keyword>
<keyword id="KW-0227">DNA damage</keyword>
<keyword id="KW-0234">DNA repair</keyword>
<keyword id="KW-0967">Endosome</keyword>
<keyword id="KW-0378">Hydrolase</keyword>
<keyword id="KW-0539">Nucleus</keyword>
<keyword id="KW-0597">Phosphoprotein</keyword>
<keyword id="KW-0645">Protease</keyword>
<keyword id="KW-1185">Reference proteome</keyword>
<keyword id="KW-0788">Thiol protease</keyword>
<keyword id="KW-0832">Ubl conjugation</keyword>
<keyword id="KW-0833">Ubl conjugation pathway</keyword>